<name>Y2488_GEOTN</name>
<dbReference type="EMBL" id="CP000557">
    <property type="protein sequence ID" value="ABO67833.1"/>
    <property type="status" value="ALT_INIT"/>
    <property type="molecule type" value="Genomic_DNA"/>
</dbReference>
<dbReference type="RefSeq" id="WP_008881014.1">
    <property type="nucleotide sequence ID" value="NC_009328.1"/>
</dbReference>
<dbReference type="SMR" id="A4IR79"/>
<dbReference type="GeneID" id="87623364"/>
<dbReference type="KEGG" id="gtn:GTNG_2488"/>
<dbReference type="eggNOG" id="COG4472">
    <property type="taxonomic scope" value="Bacteria"/>
</dbReference>
<dbReference type="HOGENOM" id="CLU_162466_0_0_9"/>
<dbReference type="Proteomes" id="UP000001578">
    <property type="component" value="Chromosome"/>
</dbReference>
<dbReference type="HAMAP" id="MF_01507">
    <property type="entry name" value="UPF0297"/>
    <property type="match status" value="1"/>
</dbReference>
<dbReference type="InterPro" id="IPR009309">
    <property type="entry name" value="IreB"/>
</dbReference>
<dbReference type="NCBIfam" id="NF003997">
    <property type="entry name" value="PRK05473.1"/>
    <property type="match status" value="1"/>
</dbReference>
<dbReference type="PANTHER" id="PTHR40067">
    <property type="entry name" value="UPF0297 PROTEIN YRZL"/>
    <property type="match status" value="1"/>
</dbReference>
<dbReference type="PANTHER" id="PTHR40067:SF1">
    <property type="entry name" value="UPF0297 PROTEIN YRZL"/>
    <property type="match status" value="1"/>
</dbReference>
<dbReference type="Pfam" id="PF06135">
    <property type="entry name" value="IreB"/>
    <property type="match status" value="1"/>
</dbReference>
<dbReference type="PIRSF" id="PIRSF037258">
    <property type="entry name" value="DUF965_bac"/>
    <property type="match status" value="1"/>
</dbReference>
<proteinExistence type="inferred from homology"/>
<sequence>MSSFDQTMQFHFPEEPAETNVREVLLTVYDALQEKGYNPINQIVGYLLSGDPAYIPRHKDARTLIRKIERDELIEELVKFYLQGQRKG</sequence>
<evidence type="ECO:0000255" key="1">
    <source>
        <dbReference type="HAMAP-Rule" id="MF_01507"/>
    </source>
</evidence>
<evidence type="ECO:0000305" key="2"/>
<reference key="1">
    <citation type="journal article" date="2007" name="Proc. Natl. Acad. Sci. U.S.A.">
        <title>Genome and proteome of long-chain alkane degrading Geobacillus thermodenitrificans NG80-2 isolated from a deep-subsurface oil reservoir.</title>
        <authorList>
            <person name="Feng L."/>
            <person name="Wang W."/>
            <person name="Cheng J."/>
            <person name="Ren Y."/>
            <person name="Zhao G."/>
            <person name="Gao C."/>
            <person name="Tang Y."/>
            <person name="Liu X."/>
            <person name="Han W."/>
            <person name="Peng X."/>
            <person name="Liu R."/>
            <person name="Wang L."/>
        </authorList>
    </citation>
    <scope>NUCLEOTIDE SEQUENCE [LARGE SCALE GENOMIC DNA]</scope>
    <source>
        <strain>NG80-2</strain>
    </source>
</reference>
<protein>
    <recommendedName>
        <fullName evidence="1">UPF0297 protein GTNG_2488</fullName>
    </recommendedName>
</protein>
<accession>A4IR79</accession>
<feature type="chain" id="PRO_0000296637" description="UPF0297 protein GTNG_2488">
    <location>
        <begin position="1"/>
        <end position="88"/>
    </location>
</feature>
<comment type="similarity">
    <text evidence="1">Belongs to the UPF0297 family.</text>
</comment>
<comment type="sequence caution" evidence="2">
    <conflict type="erroneous initiation">
        <sequence resource="EMBL-CDS" id="ABO67833"/>
    </conflict>
</comment>
<gene>
    <name type="ordered locus">GTNG_2488</name>
</gene>
<organism>
    <name type="scientific">Geobacillus thermodenitrificans (strain NG80-2)</name>
    <dbReference type="NCBI Taxonomy" id="420246"/>
    <lineage>
        <taxon>Bacteria</taxon>
        <taxon>Bacillati</taxon>
        <taxon>Bacillota</taxon>
        <taxon>Bacilli</taxon>
        <taxon>Bacillales</taxon>
        <taxon>Anoxybacillaceae</taxon>
        <taxon>Geobacillus</taxon>
    </lineage>
</organism>